<gene>
    <name type="ordered locus">tlr1302</name>
</gene>
<dbReference type="EC" id="3.6.1.9" evidence="1"/>
<dbReference type="EMBL" id="BA000039">
    <property type="protein sequence ID" value="BAC08854.1"/>
    <property type="molecule type" value="Genomic_DNA"/>
</dbReference>
<dbReference type="RefSeq" id="NP_682092.1">
    <property type="nucleotide sequence ID" value="NC_004113.1"/>
</dbReference>
<dbReference type="RefSeq" id="WP_011057142.1">
    <property type="nucleotide sequence ID" value="NC_004113.1"/>
</dbReference>
<dbReference type="SMR" id="Q8DJC5"/>
<dbReference type="STRING" id="197221.gene:10747899"/>
<dbReference type="EnsemblBacteria" id="BAC08854">
    <property type="protein sequence ID" value="BAC08854"/>
    <property type="gene ID" value="BAC08854"/>
</dbReference>
<dbReference type="KEGG" id="tel:tlr1302"/>
<dbReference type="PATRIC" id="fig|197221.4.peg.1370"/>
<dbReference type="eggNOG" id="COG0424">
    <property type="taxonomic scope" value="Bacteria"/>
</dbReference>
<dbReference type="Proteomes" id="UP000000440">
    <property type="component" value="Chromosome"/>
</dbReference>
<dbReference type="GO" id="GO:0005737">
    <property type="term" value="C:cytoplasm"/>
    <property type="evidence" value="ECO:0007669"/>
    <property type="project" value="UniProtKB-SubCell"/>
</dbReference>
<dbReference type="GO" id="GO:0047429">
    <property type="term" value="F:nucleoside triphosphate diphosphatase activity"/>
    <property type="evidence" value="ECO:0007669"/>
    <property type="project" value="UniProtKB-EC"/>
</dbReference>
<dbReference type="GO" id="GO:0009117">
    <property type="term" value="P:nucleotide metabolic process"/>
    <property type="evidence" value="ECO:0007669"/>
    <property type="project" value="UniProtKB-KW"/>
</dbReference>
<dbReference type="CDD" id="cd00555">
    <property type="entry name" value="Maf"/>
    <property type="match status" value="1"/>
</dbReference>
<dbReference type="Gene3D" id="3.90.950.10">
    <property type="match status" value="1"/>
</dbReference>
<dbReference type="HAMAP" id="MF_00528">
    <property type="entry name" value="Maf"/>
    <property type="match status" value="1"/>
</dbReference>
<dbReference type="InterPro" id="IPR029001">
    <property type="entry name" value="ITPase-like_fam"/>
</dbReference>
<dbReference type="InterPro" id="IPR003697">
    <property type="entry name" value="Maf-like"/>
</dbReference>
<dbReference type="NCBIfam" id="TIGR00172">
    <property type="entry name" value="maf"/>
    <property type="match status" value="1"/>
</dbReference>
<dbReference type="PANTHER" id="PTHR43213">
    <property type="entry name" value="BIFUNCTIONAL DTTP/UTP PYROPHOSPHATASE/METHYLTRANSFERASE PROTEIN-RELATED"/>
    <property type="match status" value="1"/>
</dbReference>
<dbReference type="PANTHER" id="PTHR43213:SF5">
    <property type="entry name" value="BIFUNCTIONAL DTTP_UTP PYROPHOSPHATASE_METHYLTRANSFERASE PROTEIN-RELATED"/>
    <property type="match status" value="1"/>
</dbReference>
<dbReference type="Pfam" id="PF02545">
    <property type="entry name" value="Maf"/>
    <property type="match status" value="1"/>
</dbReference>
<dbReference type="PIRSF" id="PIRSF006305">
    <property type="entry name" value="Maf"/>
    <property type="match status" value="1"/>
</dbReference>
<dbReference type="SUPFAM" id="SSF52972">
    <property type="entry name" value="ITPase-like"/>
    <property type="match status" value="1"/>
</dbReference>
<proteinExistence type="inferred from homology"/>
<accession>Q8DJC5</accession>
<reference key="1">
    <citation type="journal article" date="2002" name="DNA Res.">
        <title>Complete genome structure of the thermophilic cyanobacterium Thermosynechococcus elongatus BP-1.</title>
        <authorList>
            <person name="Nakamura Y."/>
            <person name="Kaneko T."/>
            <person name="Sato S."/>
            <person name="Ikeuchi M."/>
            <person name="Katoh H."/>
            <person name="Sasamoto S."/>
            <person name="Watanabe A."/>
            <person name="Iriguchi M."/>
            <person name="Kawashima K."/>
            <person name="Kimura T."/>
            <person name="Kishida Y."/>
            <person name="Kiyokawa C."/>
            <person name="Kohara M."/>
            <person name="Matsumoto M."/>
            <person name="Matsuno A."/>
            <person name="Nakazaki N."/>
            <person name="Shimpo S."/>
            <person name="Sugimoto M."/>
            <person name="Takeuchi C."/>
            <person name="Yamada M."/>
            <person name="Tabata S."/>
        </authorList>
    </citation>
    <scope>NUCLEOTIDE SEQUENCE [LARGE SCALE GENOMIC DNA]</scope>
    <source>
        <strain>NIES-2133 / IAM M-273 / BP-1</strain>
    </source>
</reference>
<evidence type="ECO:0000255" key="1">
    <source>
        <dbReference type="HAMAP-Rule" id="MF_00528"/>
    </source>
</evidence>
<feature type="chain" id="PRO_0000123063" description="Nucleoside triphosphate pyrophosphatase">
    <location>
        <begin position="1"/>
        <end position="198"/>
    </location>
</feature>
<feature type="active site" description="Proton acceptor" evidence="1">
    <location>
        <position position="70"/>
    </location>
</feature>
<keyword id="KW-0963">Cytoplasm</keyword>
<keyword id="KW-0378">Hydrolase</keyword>
<keyword id="KW-0546">Nucleotide metabolism</keyword>
<keyword id="KW-1185">Reference proteome</keyword>
<comment type="function">
    <text evidence="1">Nucleoside triphosphate pyrophosphatase. May have a dual role in cell division arrest and in preventing the incorporation of modified nucleotides into cellular nucleic acids.</text>
</comment>
<comment type="catalytic activity">
    <reaction evidence="1">
        <text>a ribonucleoside 5'-triphosphate + H2O = a ribonucleoside 5'-phosphate + diphosphate + H(+)</text>
        <dbReference type="Rhea" id="RHEA:23996"/>
        <dbReference type="ChEBI" id="CHEBI:15377"/>
        <dbReference type="ChEBI" id="CHEBI:15378"/>
        <dbReference type="ChEBI" id="CHEBI:33019"/>
        <dbReference type="ChEBI" id="CHEBI:58043"/>
        <dbReference type="ChEBI" id="CHEBI:61557"/>
        <dbReference type="EC" id="3.6.1.9"/>
    </reaction>
</comment>
<comment type="catalytic activity">
    <reaction evidence="1">
        <text>a 2'-deoxyribonucleoside 5'-triphosphate + H2O = a 2'-deoxyribonucleoside 5'-phosphate + diphosphate + H(+)</text>
        <dbReference type="Rhea" id="RHEA:44644"/>
        <dbReference type="ChEBI" id="CHEBI:15377"/>
        <dbReference type="ChEBI" id="CHEBI:15378"/>
        <dbReference type="ChEBI" id="CHEBI:33019"/>
        <dbReference type="ChEBI" id="CHEBI:61560"/>
        <dbReference type="ChEBI" id="CHEBI:65317"/>
        <dbReference type="EC" id="3.6.1.9"/>
    </reaction>
</comment>
<comment type="cofactor">
    <cofactor evidence="1">
        <name>a divalent metal cation</name>
        <dbReference type="ChEBI" id="CHEBI:60240"/>
    </cofactor>
</comment>
<comment type="subcellular location">
    <subcellularLocation>
        <location evidence="1">Cytoplasm</location>
    </subcellularLocation>
</comment>
<comment type="similarity">
    <text evidence="1">Belongs to the Maf family.</text>
</comment>
<protein>
    <recommendedName>
        <fullName evidence="1">Nucleoside triphosphate pyrophosphatase</fullName>
        <ecNumber evidence="1">3.6.1.9</ecNumber>
    </recommendedName>
    <alternativeName>
        <fullName evidence="1">Nucleotide pyrophosphatase</fullName>
        <shortName evidence="1">Nucleotide PPase</shortName>
    </alternativeName>
</protein>
<sequence>MVPFVLASASPARRQLLQQIGIDPIIQPSHFDESVIQAATPTELVRLLARCKAETVAQSYSAPALILGCDSVLVLGGEIYGKPASPEMAIARWQQMRGQTADLLTGHALIDLAQGRTCVEVESTQVVFAQVSDAEIAAYVASGEPLACAGCFALDGQGGAFVEKIVGTPSNVIGLSLPLLRRLLLSLGYTLADVQNKK</sequence>
<name>NTPP_THEVB</name>
<organism>
    <name type="scientific">Thermosynechococcus vestitus (strain NIES-2133 / IAM M-273 / BP-1)</name>
    <dbReference type="NCBI Taxonomy" id="197221"/>
    <lineage>
        <taxon>Bacteria</taxon>
        <taxon>Bacillati</taxon>
        <taxon>Cyanobacteriota</taxon>
        <taxon>Cyanophyceae</taxon>
        <taxon>Acaryochloridales</taxon>
        <taxon>Thermosynechococcaceae</taxon>
        <taxon>Thermosynechococcus</taxon>
    </lineage>
</organism>